<feature type="chain" id="PRO_1000093755" description="Translation initiation factor IF-2">
    <location>
        <begin position="1"/>
        <end position="868"/>
    </location>
</feature>
<feature type="domain" description="tr-type G">
    <location>
        <begin position="368"/>
        <end position="537"/>
    </location>
</feature>
<feature type="region of interest" description="Disordered" evidence="3">
    <location>
        <begin position="49"/>
        <end position="72"/>
    </location>
</feature>
<feature type="region of interest" description="Disordered" evidence="3">
    <location>
        <begin position="92"/>
        <end position="276"/>
    </location>
</feature>
<feature type="region of interest" description="G1" evidence="1">
    <location>
        <begin position="377"/>
        <end position="384"/>
    </location>
</feature>
<feature type="region of interest" description="G2" evidence="1">
    <location>
        <begin position="402"/>
        <end position="406"/>
    </location>
</feature>
<feature type="region of interest" description="G3" evidence="1">
    <location>
        <begin position="423"/>
        <end position="426"/>
    </location>
</feature>
<feature type="region of interest" description="G4" evidence="1">
    <location>
        <begin position="477"/>
        <end position="480"/>
    </location>
</feature>
<feature type="region of interest" description="G5" evidence="1">
    <location>
        <begin position="513"/>
        <end position="515"/>
    </location>
</feature>
<feature type="compositionally biased region" description="Basic and acidic residues" evidence="3">
    <location>
        <begin position="92"/>
        <end position="240"/>
    </location>
</feature>
<feature type="binding site" evidence="2">
    <location>
        <begin position="377"/>
        <end position="384"/>
    </location>
    <ligand>
        <name>GTP</name>
        <dbReference type="ChEBI" id="CHEBI:37565"/>
    </ligand>
</feature>
<feature type="binding site" evidence="2">
    <location>
        <begin position="423"/>
        <end position="427"/>
    </location>
    <ligand>
        <name>GTP</name>
        <dbReference type="ChEBI" id="CHEBI:37565"/>
    </ligand>
</feature>
<feature type="binding site" evidence="2">
    <location>
        <begin position="477"/>
        <end position="480"/>
    </location>
    <ligand>
        <name>GTP</name>
        <dbReference type="ChEBI" id="CHEBI:37565"/>
    </ligand>
</feature>
<keyword id="KW-0963">Cytoplasm</keyword>
<keyword id="KW-0342">GTP-binding</keyword>
<keyword id="KW-0396">Initiation factor</keyword>
<keyword id="KW-0547">Nucleotide-binding</keyword>
<keyword id="KW-0648">Protein biosynthesis</keyword>
<proteinExistence type="inferred from homology"/>
<comment type="function">
    <text evidence="2">One of the essential components for the initiation of protein synthesis. Protects formylmethionyl-tRNA from spontaneous hydrolysis and promotes its binding to the 30S ribosomal subunits. Also involved in the hydrolysis of GTP during the formation of the 70S ribosomal complex.</text>
</comment>
<comment type="subcellular location">
    <subcellularLocation>
        <location evidence="2">Cytoplasm</location>
    </subcellularLocation>
</comment>
<comment type="similarity">
    <text evidence="2">Belongs to the TRAFAC class translation factor GTPase superfamily. Classic translation factor GTPase family. IF-2 subfamily.</text>
</comment>
<organism>
    <name type="scientific">Alteromonas mediterranea (strain DSM 17117 / CIP 110805 / LMG 28347 / Deep ecotype)</name>
    <dbReference type="NCBI Taxonomy" id="1774373"/>
    <lineage>
        <taxon>Bacteria</taxon>
        <taxon>Pseudomonadati</taxon>
        <taxon>Pseudomonadota</taxon>
        <taxon>Gammaproteobacteria</taxon>
        <taxon>Alteromonadales</taxon>
        <taxon>Alteromonadaceae</taxon>
        <taxon>Alteromonas/Salinimonas group</taxon>
        <taxon>Alteromonas</taxon>
    </lineage>
</organism>
<accession>B4RXT8</accession>
<accession>F2GAC8</accession>
<gene>
    <name evidence="2" type="primary">infB</name>
    <name type="ordered locus">MADE_1008920</name>
</gene>
<name>IF2_ALTMD</name>
<sequence>MADVSIEKLASDIGTTVDRLVGQFKDAGISKSAGEQVNEDEKQKLLDHLSKQHGSAAEPTRMTLKRKTTSTLSVGKSKEVKVEVRKKRTYVKRSDIEEQQRQAEEEAKRLEEEARLKREAEEKAAAEAKKAAEEKARKAQEAKKAAEEERVRRAEQAKKEAEARKKDEPELTEAEKAEAEAARQEEERLRKAQEEEAQKKLEEDAKKAADEARKLAEENERRWKEEEERRKKAEAEEVHLHSNRYAQEAEDEEDMQVERSSRRRRKSKKNAGEHLKQGFNKPAAPVERVVKLGATITVGELASKLAIKSNEVIKTMMKMGEMATINQVLDQDTAVLVIEEMGHKYELVNDNALEDELLADGTDGEKTSRAPVVTIMGHVDHGKTSLLDYIRRAKVADGEAGGITQHIGAYKVQTDNGEITFLDTPGHAAFTAMRARGATATDIVILVVAADDGVMPQTKEAVQHARAAGVPLIVAVNKMDKETADPDRVKTELSQLEVISEEWGGEHQFCNVSAKTGMGVDELLEAIVLQSELLDLQAVAEGPGRGIVIESRLDKGRGPVASVLVQEGQLRAGDILLCGEEYGRVRAMRDENGKDMKLAGPSTPVEVLGLSGVPVAGEDAAVVKDERKAREVAAKRHQKKRELKLARQQKAKLENMFANMESGDVSELNIVLKADVQGSVEAISESLIKLSTSEVKVNIVGSGVGGITETDATLAAASGAIVLGFNVRADATARRVLEAEEIDLRYYSVIYNLIDEVKAAMSGMLAPEFKQEIIGLAEVRDVFKSPKLGAIAGCMVTEGNVKRSNPIRVLRDNVVIYEGELESLRRFKDDVQDVRNGMECGIGVKNYNDVKVGDQIEVFEIVEVKREI</sequence>
<evidence type="ECO:0000250" key="1"/>
<evidence type="ECO:0000255" key="2">
    <source>
        <dbReference type="HAMAP-Rule" id="MF_00100"/>
    </source>
</evidence>
<evidence type="ECO:0000256" key="3">
    <source>
        <dbReference type="SAM" id="MobiDB-lite"/>
    </source>
</evidence>
<dbReference type="EMBL" id="CP001103">
    <property type="protein sequence ID" value="AEA97922.1"/>
    <property type="molecule type" value="Genomic_DNA"/>
</dbReference>
<dbReference type="RefSeq" id="WP_012518253.1">
    <property type="nucleotide sequence ID" value="NC_011138.3"/>
</dbReference>
<dbReference type="SMR" id="B4RXT8"/>
<dbReference type="GeneID" id="56342192"/>
<dbReference type="KEGG" id="amc:MADE_1008920"/>
<dbReference type="HOGENOM" id="CLU_006301_6_3_6"/>
<dbReference type="Proteomes" id="UP000001870">
    <property type="component" value="Chromosome"/>
</dbReference>
<dbReference type="GO" id="GO:0005829">
    <property type="term" value="C:cytosol"/>
    <property type="evidence" value="ECO:0007669"/>
    <property type="project" value="TreeGrafter"/>
</dbReference>
<dbReference type="GO" id="GO:0005525">
    <property type="term" value="F:GTP binding"/>
    <property type="evidence" value="ECO:0007669"/>
    <property type="project" value="UniProtKB-KW"/>
</dbReference>
<dbReference type="GO" id="GO:0003924">
    <property type="term" value="F:GTPase activity"/>
    <property type="evidence" value="ECO:0007669"/>
    <property type="project" value="UniProtKB-UniRule"/>
</dbReference>
<dbReference type="GO" id="GO:0097216">
    <property type="term" value="F:guanosine tetraphosphate binding"/>
    <property type="evidence" value="ECO:0007669"/>
    <property type="project" value="UniProtKB-ARBA"/>
</dbReference>
<dbReference type="GO" id="GO:0003743">
    <property type="term" value="F:translation initiation factor activity"/>
    <property type="evidence" value="ECO:0007669"/>
    <property type="project" value="UniProtKB-UniRule"/>
</dbReference>
<dbReference type="CDD" id="cd01887">
    <property type="entry name" value="IF2_eIF5B"/>
    <property type="match status" value="1"/>
</dbReference>
<dbReference type="CDD" id="cd03702">
    <property type="entry name" value="IF2_mtIF2_II"/>
    <property type="match status" value="1"/>
</dbReference>
<dbReference type="CDD" id="cd03692">
    <property type="entry name" value="mtIF2_IVc"/>
    <property type="match status" value="1"/>
</dbReference>
<dbReference type="FunFam" id="2.40.30.10:FF:000007">
    <property type="entry name" value="Translation initiation factor IF-2"/>
    <property type="match status" value="1"/>
</dbReference>
<dbReference type="FunFam" id="2.40.30.10:FF:000008">
    <property type="entry name" value="Translation initiation factor IF-2"/>
    <property type="match status" value="1"/>
</dbReference>
<dbReference type="FunFam" id="3.40.50.10050:FF:000001">
    <property type="entry name" value="Translation initiation factor IF-2"/>
    <property type="match status" value="1"/>
</dbReference>
<dbReference type="FunFam" id="3.40.50.300:FF:000019">
    <property type="entry name" value="Translation initiation factor IF-2"/>
    <property type="match status" value="1"/>
</dbReference>
<dbReference type="Gene3D" id="3.40.50.300">
    <property type="entry name" value="P-loop containing nucleotide triphosphate hydrolases"/>
    <property type="match status" value="1"/>
</dbReference>
<dbReference type="Gene3D" id="3.30.56.50">
    <property type="entry name" value="Putative DNA-binding domain, N-terminal subdomain of bacterial translation initiation factor IF2"/>
    <property type="match status" value="1"/>
</dbReference>
<dbReference type="Gene3D" id="2.40.30.10">
    <property type="entry name" value="Translation factors"/>
    <property type="match status" value="2"/>
</dbReference>
<dbReference type="Gene3D" id="3.40.50.10050">
    <property type="entry name" value="Translation initiation factor IF- 2, domain 3"/>
    <property type="match status" value="1"/>
</dbReference>
<dbReference type="HAMAP" id="MF_00100_B">
    <property type="entry name" value="IF_2_B"/>
    <property type="match status" value="1"/>
</dbReference>
<dbReference type="InterPro" id="IPR009061">
    <property type="entry name" value="DNA-bd_dom_put_sf"/>
</dbReference>
<dbReference type="InterPro" id="IPR053905">
    <property type="entry name" value="EF-G-like_DII"/>
</dbReference>
<dbReference type="InterPro" id="IPR004161">
    <property type="entry name" value="EFTu-like_2"/>
</dbReference>
<dbReference type="InterPro" id="IPR013575">
    <property type="entry name" value="IF2_assoc_dom_bac"/>
</dbReference>
<dbReference type="InterPro" id="IPR044145">
    <property type="entry name" value="IF2_II"/>
</dbReference>
<dbReference type="InterPro" id="IPR006847">
    <property type="entry name" value="IF2_N"/>
</dbReference>
<dbReference type="InterPro" id="IPR027417">
    <property type="entry name" value="P-loop_NTPase"/>
</dbReference>
<dbReference type="InterPro" id="IPR005225">
    <property type="entry name" value="Small_GTP-bd"/>
</dbReference>
<dbReference type="InterPro" id="IPR000795">
    <property type="entry name" value="T_Tr_GTP-bd_dom"/>
</dbReference>
<dbReference type="InterPro" id="IPR000178">
    <property type="entry name" value="TF_IF2_bacterial-like"/>
</dbReference>
<dbReference type="InterPro" id="IPR015760">
    <property type="entry name" value="TIF_IF2"/>
</dbReference>
<dbReference type="InterPro" id="IPR023115">
    <property type="entry name" value="TIF_IF2_dom3"/>
</dbReference>
<dbReference type="InterPro" id="IPR036925">
    <property type="entry name" value="TIF_IF2_dom3_sf"/>
</dbReference>
<dbReference type="InterPro" id="IPR009000">
    <property type="entry name" value="Transl_B-barrel_sf"/>
</dbReference>
<dbReference type="NCBIfam" id="TIGR00487">
    <property type="entry name" value="IF-2"/>
    <property type="match status" value="1"/>
</dbReference>
<dbReference type="NCBIfam" id="TIGR00231">
    <property type="entry name" value="small_GTP"/>
    <property type="match status" value="1"/>
</dbReference>
<dbReference type="PANTHER" id="PTHR43381:SF5">
    <property type="entry name" value="TR-TYPE G DOMAIN-CONTAINING PROTEIN"/>
    <property type="match status" value="1"/>
</dbReference>
<dbReference type="PANTHER" id="PTHR43381">
    <property type="entry name" value="TRANSLATION INITIATION FACTOR IF-2-RELATED"/>
    <property type="match status" value="1"/>
</dbReference>
<dbReference type="Pfam" id="PF22042">
    <property type="entry name" value="EF-G_D2"/>
    <property type="match status" value="1"/>
</dbReference>
<dbReference type="Pfam" id="PF00009">
    <property type="entry name" value="GTP_EFTU"/>
    <property type="match status" value="1"/>
</dbReference>
<dbReference type="Pfam" id="PF03144">
    <property type="entry name" value="GTP_EFTU_D2"/>
    <property type="match status" value="1"/>
</dbReference>
<dbReference type="Pfam" id="PF11987">
    <property type="entry name" value="IF-2"/>
    <property type="match status" value="1"/>
</dbReference>
<dbReference type="Pfam" id="PF08364">
    <property type="entry name" value="IF2_assoc"/>
    <property type="match status" value="1"/>
</dbReference>
<dbReference type="Pfam" id="PF04760">
    <property type="entry name" value="IF2_N"/>
    <property type="match status" value="2"/>
</dbReference>
<dbReference type="SUPFAM" id="SSF52156">
    <property type="entry name" value="Initiation factor IF2/eIF5b, domain 3"/>
    <property type="match status" value="1"/>
</dbReference>
<dbReference type="SUPFAM" id="SSF52540">
    <property type="entry name" value="P-loop containing nucleoside triphosphate hydrolases"/>
    <property type="match status" value="1"/>
</dbReference>
<dbReference type="SUPFAM" id="SSF46955">
    <property type="entry name" value="Putative DNA-binding domain"/>
    <property type="match status" value="1"/>
</dbReference>
<dbReference type="SUPFAM" id="SSF50447">
    <property type="entry name" value="Translation proteins"/>
    <property type="match status" value="2"/>
</dbReference>
<dbReference type="PROSITE" id="PS51722">
    <property type="entry name" value="G_TR_2"/>
    <property type="match status" value="1"/>
</dbReference>
<dbReference type="PROSITE" id="PS01176">
    <property type="entry name" value="IF2"/>
    <property type="match status" value="1"/>
</dbReference>
<protein>
    <recommendedName>
        <fullName evidence="2">Translation initiation factor IF-2</fullName>
    </recommendedName>
</protein>
<reference key="1">
    <citation type="journal article" date="2008" name="ISME J.">
        <title>Comparative genomics of two ecotypes of the marine planktonic copiotroph Alteromonas macleodii suggests alternative lifestyles associated with different kinds of particulate organic matter.</title>
        <authorList>
            <person name="Ivars-Martinez E."/>
            <person name="Martin-Cuadrado A.-B."/>
            <person name="D'Auria G."/>
            <person name="Mira A."/>
            <person name="Ferriera S."/>
            <person name="Johnson J."/>
            <person name="Friedman R."/>
            <person name="Rodriguez-Valera F."/>
        </authorList>
    </citation>
    <scope>NUCLEOTIDE SEQUENCE [LARGE SCALE GENOMIC DNA]</scope>
    <source>
        <strain>DSM 17117 / CIP 110805 / LMG 28347 / Deep ecotype</strain>
    </source>
</reference>